<proteinExistence type="evidence at protein level"/>
<organism evidence="13">
    <name type="scientific">Mus musculus</name>
    <name type="common">Mouse</name>
    <dbReference type="NCBI Taxonomy" id="10090"/>
    <lineage>
        <taxon>Eukaryota</taxon>
        <taxon>Metazoa</taxon>
        <taxon>Chordata</taxon>
        <taxon>Craniata</taxon>
        <taxon>Vertebrata</taxon>
        <taxon>Euteleostomi</taxon>
        <taxon>Mammalia</taxon>
        <taxon>Eutheria</taxon>
        <taxon>Euarchontoglires</taxon>
        <taxon>Glires</taxon>
        <taxon>Rodentia</taxon>
        <taxon>Myomorpha</taxon>
        <taxon>Muroidea</taxon>
        <taxon>Muridae</taxon>
        <taxon>Murinae</taxon>
        <taxon>Mus</taxon>
        <taxon>Mus</taxon>
    </lineage>
</organism>
<accession>Q9EPS3</accession>
<accession>Q505E6</accession>
<accession>Q99MM0</accession>
<reference evidence="10" key="1">
    <citation type="journal article" date="2001" name="J. Biol. Chem.">
        <title>Characterization of the D-glucuronyl C5-epimerase involved in the biosynthesis of heparin and heparan sulfate.</title>
        <authorList>
            <person name="Li J.-P."/>
            <person name="Gong F."/>
            <person name="El Darwish K."/>
            <person name="Jalkanen M."/>
            <person name="Lindahl U."/>
        </authorList>
    </citation>
    <scope>NUCLEOTIDE SEQUENCE [MRNA]</scope>
    <scope>TISSUE SPECIFICITY</scope>
    <scope>FUNCTION</scope>
    <scope>PATHWAY</scope>
    <source>
        <strain>BALB/cJ</strain>
        <tissue>Liver</tissue>
        <tissue>Mast cell</tissue>
    </source>
</reference>
<reference evidence="10" key="2">
    <citation type="journal article" date="2001" name="J. Biol. Chem.">
        <title>Cloning, Golgi localization, and enzyme activity of the full-length heparin/heparan sulfate-glucuronic acid C5-epimerase.</title>
        <authorList>
            <person name="Crawford B.E."/>
            <person name="Olson S.K."/>
            <person name="Esko J.D."/>
            <person name="Pinhal M.A.S."/>
        </authorList>
    </citation>
    <scope>NUCLEOTIDE SEQUENCE [MRNA]</scope>
    <scope>CATALYTIC ACTIVITY</scope>
    <scope>PATHWAY</scope>
    <scope>FUNCTION</scope>
    <scope>SUBCELLULAR LOCATION</scope>
    <source>
        <tissue>Mast cell</tissue>
    </source>
</reference>
<reference key="3">
    <citation type="submission" date="2005-07" db="EMBL/GenBank/DDBJ databases">
        <authorList>
            <person name="Mural R.J."/>
            <person name="Adams M.D."/>
            <person name="Myers E.W."/>
            <person name="Smith H.O."/>
            <person name="Venter J.C."/>
        </authorList>
    </citation>
    <scope>NUCLEOTIDE SEQUENCE [LARGE SCALE GENOMIC DNA]</scope>
</reference>
<reference key="4">
    <citation type="journal article" date="2004" name="Genome Res.">
        <title>The status, quality, and expansion of the NIH full-length cDNA project: the Mammalian Gene Collection (MGC).</title>
        <authorList>
            <consortium name="The MGC Project Team"/>
        </authorList>
    </citation>
    <scope>NUCLEOTIDE SEQUENCE [LARGE SCALE MRNA]</scope>
    <source>
        <strain>C57BL/6J</strain>
        <tissue>Brain</tissue>
    </source>
</reference>
<reference key="5">
    <citation type="journal article" date="2001" name="Proc. Natl. Acad. Sci. U.S.A.">
        <title>Enzyme interactions in heparan sulfate biosynthesis: uronosyl 5-epimerase and 2-O-sulfotransferase interact in vivo.</title>
        <authorList>
            <person name="Pinhal M.A.S."/>
            <person name="Smith B."/>
            <person name="Olson S."/>
            <person name="Aikawa J."/>
            <person name="Kimata K."/>
            <person name="Esko J.D."/>
        </authorList>
    </citation>
    <scope>INTERACTION WITH HS2ST1</scope>
</reference>
<reference key="6">
    <citation type="journal article" date="2003" name="J. Biol. Chem.">
        <title>Targeted disruption of a murine glucuronyl C5-epimerase gene results in heparan sulfate lacking L-iduronic acid and in neonatal lethality.</title>
        <authorList>
            <person name="Li J.P."/>
            <person name="Gong F."/>
            <person name="Hagner-McWhirter A."/>
            <person name="Forsberg E."/>
            <person name="Abrink M."/>
            <person name="Kisilevsky R."/>
            <person name="Zhang X."/>
            <person name="Lindahl U."/>
        </authorList>
    </citation>
    <scope>DISRUPTION PHENOTYPE</scope>
</reference>
<reference key="7">
    <citation type="journal article" date="2006" name="Nat. Chem. Biol.">
        <title>Heparan sulfate C5-epimerase is essential for heparin biosynthesis in mast cells.</title>
        <authorList>
            <person name="Feyerabend T.B."/>
            <person name="Li J.P."/>
            <person name="Lindahl U."/>
            <person name="Rodewald H.R."/>
        </authorList>
    </citation>
    <scope>CATALYTIC ACTIVITY</scope>
    <scope>FUNCTION</scope>
</reference>
<reference key="8">
    <citation type="journal article" date="2010" name="J. Immunol.">
        <title>Impaired lymphoid organ development in mice lacking the heparan sulfate modifying enzyme glucuronyl C5-epimerase.</title>
        <authorList>
            <person name="Reijmers R.M."/>
            <person name="Vondenhoff M.F."/>
            <person name="Roozendaal R."/>
            <person name="Kuil A."/>
            <person name="Li J.P."/>
            <person name="Spaargaren M."/>
            <person name="Pals S.T."/>
            <person name="Mebius R.E."/>
        </authorList>
    </citation>
    <scope>DISRUPTION PHENOTYPE</scope>
    <scope>FUNCTION</scope>
</reference>
<dbReference type="EC" id="5.1.3.17" evidence="5 8"/>
<dbReference type="EMBL" id="AF330049">
    <property type="protein sequence ID" value="AAK26246.1"/>
    <property type="molecule type" value="mRNA"/>
</dbReference>
<dbReference type="EMBL" id="AF325532">
    <property type="protein sequence ID" value="AAG42004.1"/>
    <property type="molecule type" value="mRNA"/>
</dbReference>
<dbReference type="EMBL" id="CH466522">
    <property type="protein sequence ID" value="EDL26018.1"/>
    <property type="molecule type" value="Genomic_DNA"/>
</dbReference>
<dbReference type="EMBL" id="BC094587">
    <property type="protein sequence ID" value="AAH94587.1"/>
    <property type="molecule type" value="mRNA"/>
</dbReference>
<dbReference type="CCDS" id="CCDS23262.1"/>
<dbReference type="RefSeq" id="NP_001355233.1">
    <property type="nucleotide sequence ID" value="NM_001368304.1"/>
</dbReference>
<dbReference type="RefSeq" id="NP_201577.3">
    <property type="nucleotide sequence ID" value="NM_033320.5"/>
</dbReference>
<dbReference type="RefSeq" id="XP_006511634.1">
    <property type="nucleotide sequence ID" value="XM_006511571.2"/>
</dbReference>
<dbReference type="RefSeq" id="XP_006511635.1">
    <property type="nucleotide sequence ID" value="XM_006511572.2"/>
</dbReference>
<dbReference type="SMR" id="Q9EPS3"/>
<dbReference type="BioGRID" id="220233">
    <property type="interactions" value="2"/>
</dbReference>
<dbReference type="FunCoup" id="Q9EPS3">
    <property type="interactions" value="2224"/>
</dbReference>
<dbReference type="STRING" id="10090.ENSMUSP00000139949"/>
<dbReference type="GlyConnect" id="2253">
    <property type="glycosylation" value="2 N-Linked glycans (1 site)"/>
</dbReference>
<dbReference type="GlyCosmos" id="Q9EPS3">
    <property type="glycosylation" value="1 site, 2 glycans"/>
</dbReference>
<dbReference type="GlyGen" id="Q9EPS3">
    <property type="glycosylation" value="1 site, 3 N-linked glycans (1 site)"/>
</dbReference>
<dbReference type="iPTMnet" id="Q9EPS3"/>
<dbReference type="PhosphoSitePlus" id="Q9EPS3"/>
<dbReference type="SwissPalm" id="Q9EPS3"/>
<dbReference type="jPOST" id="Q9EPS3"/>
<dbReference type="PaxDb" id="10090-ENSMUSP00000139949"/>
<dbReference type="PeptideAtlas" id="Q9EPS3"/>
<dbReference type="ProteomicsDB" id="271227"/>
<dbReference type="Pumba" id="Q9EPS3"/>
<dbReference type="Antibodypedia" id="26368">
    <property type="antibodies" value="59 antibodies from 12 providers"/>
</dbReference>
<dbReference type="DNASU" id="93683"/>
<dbReference type="Ensembl" id="ENSMUST00000034785.8">
    <property type="protein sequence ID" value="ENSMUSP00000034785.8"/>
    <property type="gene ID" value="ENSMUSG00000032252.15"/>
</dbReference>
<dbReference type="Ensembl" id="ENSMUST00000185675.7">
    <property type="protein sequence ID" value="ENSMUSP00000139949.2"/>
    <property type="gene ID" value="ENSMUSG00000032252.15"/>
</dbReference>
<dbReference type="GeneID" id="93683"/>
<dbReference type="KEGG" id="mmu:93683"/>
<dbReference type="UCSC" id="uc009qac.1">
    <property type="organism name" value="mouse"/>
</dbReference>
<dbReference type="AGR" id="MGI:2136405"/>
<dbReference type="CTD" id="26035"/>
<dbReference type="MGI" id="MGI:2136405">
    <property type="gene designation" value="Glce"/>
</dbReference>
<dbReference type="VEuPathDB" id="HostDB:ENSMUSG00000032252"/>
<dbReference type="eggNOG" id="KOG3760">
    <property type="taxonomic scope" value="Eukaryota"/>
</dbReference>
<dbReference type="GeneTree" id="ENSGT00390000006043"/>
<dbReference type="HOGENOM" id="CLU_028636_0_0_1"/>
<dbReference type="InParanoid" id="Q9EPS3"/>
<dbReference type="OMA" id="RGVFMYF"/>
<dbReference type="OrthoDB" id="5914444at2759"/>
<dbReference type="PhylomeDB" id="Q9EPS3"/>
<dbReference type="TreeFam" id="TF105869"/>
<dbReference type="BRENDA" id="5.1.3.17">
    <property type="organism ID" value="3474"/>
</dbReference>
<dbReference type="UniPathway" id="UPA00756"/>
<dbReference type="UniPathway" id="UPA00862"/>
<dbReference type="BioGRID-ORCS" id="93683">
    <property type="hits" value="5 hits in 77 CRISPR screens"/>
</dbReference>
<dbReference type="ChiTaRS" id="Glce">
    <property type="organism name" value="mouse"/>
</dbReference>
<dbReference type="PRO" id="PR:Q9EPS3"/>
<dbReference type="Proteomes" id="UP000000589">
    <property type="component" value="Chromosome 9"/>
</dbReference>
<dbReference type="RNAct" id="Q9EPS3">
    <property type="molecule type" value="protein"/>
</dbReference>
<dbReference type="Bgee" id="ENSMUSG00000032252">
    <property type="expression patterns" value="Expressed in saccule of membranous labyrinth and 263 other cell types or tissues"/>
</dbReference>
<dbReference type="ExpressionAtlas" id="Q9EPS3">
    <property type="expression patterns" value="baseline and differential"/>
</dbReference>
<dbReference type="GO" id="GO:0005794">
    <property type="term" value="C:Golgi apparatus"/>
    <property type="evidence" value="ECO:0000314"/>
    <property type="project" value="UniProtKB"/>
</dbReference>
<dbReference type="GO" id="GO:0000139">
    <property type="term" value="C:Golgi membrane"/>
    <property type="evidence" value="ECO:0000304"/>
    <property type="project" value="Reactome"/>
</dbReference>
<dbReference type="GO" id="GO:0005509">
    <property type="term" value="F:calcium ion binding"/>
    <property type="evidence" value="ECO:0000250"/>
    <property type="project" value="UniProtKB"/>
</dbReference>
<dbReference type="GO" id="GO:0047464">
    <property type="term" value="F:heparosan-N-sulfate-glucuronate 5-epimerase activity"/>
    <property type="evidence" value="ECO:0000314"/>
    <property type="project" value="MGI"/>
</dbReference>
<dbReference type="GO" id="GO:0042803">
    <property type="term" value="F:protein homodimerization activity"/>
    <property type="evidence" value="ECO:0000250"/>
    <property type="project" value="UniProtKB"/>
</dbReference>
<dbReference type="GO" id="GO:0016857">
    <property type="term" value="F:racemase and epimerase activity, acting on carbohydrates and derivatives"/>
    <property type="evidence" value="ECO:0000314"/>
    <property type="project" value="UniProtKB"/>
</dbReference>
<dbReference type="GO" id="GO:0050379">
    <property type="term" value="F:UDP-glucuronate 5'-epimerase activity"/>
    <property type="evidence" value="ECO:0000304"/>
    <property type="project" value="Reactome"/>
</dbReference>
<dbReference type="GO" id="GO:0015012">
    <property type="term" value="P:heparan sulfate proteoglycan biosynthetic process"/>
    <property type="evidence" value="ECO:0000314"/>
    <property type="project" value="UniProtKB"/>
</dbReference>
<dbReference type="GO" id="GO:0030210">
    <property type="term" value="P:heparin proteoglycan biosynthetic process"/>
    <property type="evidence" value="ECO:0000314"/>
    <property type="project" value="UniProtKB"/>
</dbReference>
<dbReference type="GO" id="GO:0031345">
    <property type="term" value="P:negative regulation of cell projection organization"/>
    <property type="evidence" value="ECO:0007669"/>
    <property type="project" value="Ensembl"/>
</dbReference>
<dbReference type="GO" id="GO:0008284">
    <property type="term" value="P:positive regulation of cell population proliferation"/>
    <property type="evidence" value="ECO:0007669"/>
    <property type="project" value="Ensembl"/>
</dbReference>
<dbReference type="GO" id="GO:0060391">
    <property type="term" value="P:positive regulation of SMAD protein signal transduction"/>
    <property type="evidence" value="ECO:0007669"/>
    <property type="project" value="Ensembl"/>
</dbReference>
<dbReference type="InterPro" id="IPR010598">
    <property type="entry name" value="C5-epim_C"/>
</dbReference>
<dbReference type="InterPro" id="IPR039721">
    <property type="entry name" value="C5-epimerase"/>
</dbReference>
<dbReference type="PANTHER" id="PTHR13174">
    <property type="entry name" value="D-GLUCURONYL C5-EPIMERASE"/>
    <property type="match status" value="1"/>
</dbReference>
<dbReference type="PANTHER" id="PTHR13174:SF3">
    <property type="entry name" value="D-GLUCURONYL C5-EPIMERASE"/>
    <property type="match status" value="1"/>
</dbReference>
<dbReference type="Pfam" id="PF06662">
    <property type="entry name" value="C5-epim_C"/>
    <property type="match status" value="1"/>
</dbReference>
<dbReference type="Pfam" id="PF21174">
    <property type="entry name" value="Glce_b_sandwich"/>
    <property type="match status" value="1"/>
</dbReference>
<protein>
    <recommendedName>
        <fullName>D-glucuronyl C5-epimerase</fullName>
        <ecNumber evidence="5 8">5.1.3.17</ecNumber>
    </recommendedName>
    <alternativeName>
        <fullName>Heparan sulfate C5-epimerase</fullName>
        <shortName>Hsepi</shortName>
    </alternativeName>
    <alternativeName>
        <fullName>Heparin sulfate C5-epimerase</fullName>
    </alternativeName>
    <alternativeName>
        <fullName>Heparin/heparan sulfate:glucuronic acid C5-epimerase</fullName>
    </alternativeName>
    <alternativeName>
        <fullName>Heparosan-N-sulfate-glucuronate 5-epimerase</fullName>
    </alternativeName>
</protein>
<gene>
    <name type="primary">Glce</name>
</gene>
<evidence type="ECO:0000250" key="1">
    <source>
        <dbReference type="UniProtKB" id="F1QR43"/>
    </source>
</evidence>
<evidence type="ECO:0000250" key="2">
    <source>
        <dbReference type="UniProtKB" id="O94923"/>
    </source>
</evidence>
<evidence type="ECO:0000255" key="3"/>
<evidence type="ECO:0000269" key="4">
    <source>
    </source>
</evidence>
<evidence type="ECO:0000269" key="5">
    <source>
    </source>
</evidence>
<evidence type="ECO:0000269" key="6">
    <source>
    </source>
</evidence>
<evidence type="ECO:0000269" key="7">
    <source>
    </source>
</evidence>
<evidence type="ECO:0000269" key="8">
    <source>
    </source>
</evidence>
<evidence type="ECO:0000269" key="9">
    <source>
    </source>
</evidence>
<evidence type="ECO:0000305" key="10"/>
<evidence type="ECO:0000305" key="11">
    <source>
    </source>
</evidence>
<evidence type="ECO:0000305" key="12">
    <source>
    </source>
</evidence>
<evidence type="ECO:0000312" key="13">
    <source>
        <dbReference type="EMBL" id="AAG42004.1"/>
    </source>
</evidence>
<sequence>MRCLAARVNYKTLIIICALFTLVTVLLWNKCSSDKAIQFPRHLSSGFRVDGLEKRSAASESNHYANHIAKQQSEEAFPQEQQKAPPVVGGFNSNGGSKVLGLKYEEIDCLINDEHTIKGRREGNEVFLPFTWVEKYFDVYGKVVQYDGYDRFEFSHSYSKVYAQRSPYHPDGVFMSFEGYNVEVRDRVKCISGVEGVPLSTQWGPQGYFYPIQIAQYGLSHYSKNLTEKPPHIEVYETAEDRDRNIRPNEWTVPKGCFMASVADKSRSTNVKQFIAPETSEGVSLQLGNTKDFIISFDLKLLTNGSVSVVLETTEKNQLFTVHYVSNTQLIAFRDRDIYYGIGPRTSWSTVTRDLVTDLRKGVGLSNTKAVKPTKIMPKKVVRLIAKGKGFLDNITISTTAHMAAFFAASDWLVRNQDEKGGWPIMVTRKLGEGFKSLEPGWYSAMAQGQAISTLVRAYLLTKDYVFLSSALRATAPYKFPSEQHGVKAVFMNKHDWYEEYPTTPSSFVLNGFMYSLIGLYDLKETAGETLGKEARSLYERGMESLKAMLPLYDTGSGTIYDLRHFMLGIAPNLARWDYHTTHINQLQLLSTIDESPIFKEFVKRWKSYLKGSRAKHN</sequence>
<comment type="function">
    <text evidence="4 5 8 9">Converts D-glucuronic acid residues adjacent to N-sulfate sugar residues to L-iduronic acid residues, both in maturing heparan sulfate (HS) and heparin chains. This is important for further modifications that determine the specificity of interactions between these glycosaminoglycans and proteins.</text>
</comment>
<comment type="catalytic activity">
    <reaction evidence="5 8">
        <text>[heparosan-N-sulfate](n) = [heparan-N-sulfate](n)</text>
        <dbReference type="Rhea" id="RHEA:20197"/>
        <dbReference type="Rhea" id="RHEA-COMP:9556"/>
        <dbReference type="Rhea" id="RHEA-COMP:9557"/>
        <dbReference type="ChEBI" id="CHEBI:58041"/>
        <dbReference type="ChEBI" id="CHEBI:58287"/>
        <dbReference type="EC" id="5.1.3.17"/>
    </reaction>
</comment>
<comment type="pathway">
    <text evidence="11 12">Glycan metabolism; heparan sulfate biosynthesis.</text>
</comment>
<comment type="pathway">
    <text evidence="11 12">Glycan metabolism; heparin biosynthesis.</text>
</comment>
<comment type="subunit">
    <text evidence="1 6">Homodimer (By similarity). Interacts with HS2ST1 (PubMed:11687650).</text>
</comment>
<comment type="subcellular location">
    <subcellularLocation>
        <location evidence="5">Golgi apparatus membrane</location>
        <topology evidence="5">Single-pass type II membrane protein</topology>
    </subcellularLocation>
</comment>
<comment type="tissue specificity">
    <text evidence="4">Widely expressed with highest levels in lung and lowest levels in spleen.</text>
</comment>
<comment type="disruption phenotype">
    <text evidence="7 9">Perinatal lethality. Pups die shortly after birth, apparently from respiratory failure. Mice show immature lung structure, lack kidneys, have abnormally small thymus and spleen, defects in inguinal lymph node development and in blood vessel formation proximal to the inguinal lymph nodes, and display important skeletal deficiencies. Mutant mice have heparan and heparin chains that are deficient in iduronic acid residues, and that therefore have altered O-sulfation patterns.</text>
</comment>
<comment type="similarity">
    <text evidence="10">Belongs to the D-glucuronyl C5-epimerase family.</text>
</comment>
<keyword id="KW-0106">Calcium</keyword>
<keyword id="KW-0333">Golgi apparatus</keyword>
<keyword id="KW-0413">Isomerase</keyword>
<keyword id="KW-0472">Membrane</keyword>
<keyword id="KW-0479">Metal-binding</keyword>
<keyword id="KW-1185">Reference proteome</keyword>
<keyword id="KW-0735">Signal-anchor</keyword>
<keyword id="KW-0812">Transmembrane</keyword>
<keyword id="KW-1133">Transmembrane helix</keyword>
<feature type="chain" id="PRO_0000192646" description="D-glucuronyl C5-epimerase">
    <location>
        <begin position="1"/>
        <end position="618"/>
    </location>
</feature>
<feature type="topological domain" description="Cytoplasmic" evidence="3">
    <location>
        <begin position="1"/>
        <end position="11"/>
    </location>
</feature>
<feature type="transmembrane region" description="Helical; Signal-anchor for type II membrane protein" evidence="3">
    <location>
        <begin position="12"/>
        <end position="29"/>
    </location>
</feature>
<feature type="topological domain" description="Lumenal" evidence="3">
    <location>
        <begin position="30"/>
        <end position="618"/>
    </location>
</feature>
<feature type="binding site" evidence="1">
    <location>
        <position position="180"/>
    </location>
    <ligand>
        <name>substrate</name>
    </ligand>
</feature>
<feature type="binding site" evidence="1">
    <location>
        <begin position="185"/>
        <end position="187"/>
    </location>
    <ligand>
        <name>substrate</name>
    </ligand>
</feature>
<feature type="binding site" evidence="2">
    <location>
        <position position="202"/>
    </location>
    <ligand>
        <name>substrate</name>
    </ligand>
</feature>
<feature type="binding site" evidence="2">
    <location>
        <position position="210"/>
    </location>
    <ligand>
        <name>substrate</name>
    </ligand>
</feature>
<feature type="binding site" evidence="1">
    <location>
        <position position="213"/>
    </location>
    <ligand>
        <name>substrate</name>
    </ligand>
</feature>
<feature type="binding site" evidence="2">
    <location>
        <position position="216"/>
    </location>
    <ligand>
        <name>substrate</name>
    </ligand>
</feature>
<feature type="binding site" evidence="2">
    <location>
        <position position="238"/>
    </location>
    <ligand>
        <name>Ca(2+)</name>
        <dbReference type="ChEBI" id="CHEBI:29108"/>
    </ligand>
</feature>
<feature type="binding site" evidence="2">
    <location>
        <position position="240"/>
    </location>
    <ligand>
        <name>Ca(2+)</name>
        <dbReference type="ChEBI" id="CHEBI:29108"/>
    </ligand>
</feature>
<feature type="binding site" evidence="2">
    <location>
        <position position="269"/>
    </location>
    <ligand>
        <name>Ca(2+)</name>
        <dbReference type="ChEBI" id="CHEBI:29108"/>
    </ligand>
</feature>
<feature type="binding site" evidence="2">
    <location>
        <position position="270"/>
    </location>
    <ligand>
        <name>Ca(2+)</name>
        <dbReference type="ChEBI" id="CHEBI:29108"/>
    </ligand>
</feature>
<feature type="binding site" evidence="2">
    <location>
        <position position="393"/>
    </location>
    <ligand>
        <name>Ca(2+)</name>
        <dbReference type="ChEBI" id="CHEBI:29108"/>
    </ligand>
</feature>
<feature type="binding site" evidence="1">
    <location>
        <begin position="430"/>
        <end position="433"/>
    </location>
    <ligand>
        <name>substrate</name>
    </ligand>
</feature>
<feature type="binding site" evidence="2">
    <location>
        <begin position="500"/>
        <end position="501"/>
    </location>
    <ligand>
        <name>substrate</name>
    </ligand>
</feature>
<feature type="binding site" evidence="2">
    <location>
        <position position="511"/>
    </location>
    <ligand>
        <name>substrate</name>
    </ligand>
</feature>
<feature type="binding site" evidence="1">
    <location>
        <position position="515"/>
    </location>
    <ligand>
        <name>substrate</name>
    </ligand>
</feature>
<feature type="binding site" evidence="2">
    <location>
        <position position="561"/>
    </location>
    <ligand>
        <name>substrate</name>
    </ligand>
</feature>
<feature type="binding site" evidence="1">
    <location>
        <position position="564"/>
    </location>
    <ligand>
        <name>substrate</name>
    </ligand>
</feature>
<feature type="binding site" evidence="2">
    <location>
        <begin position="573"/>
        <end position="582"/>
    </location>
    <ligand>
        <name>substrate</name>
    </ligand>
</feature>
<feature type="site" description="Critical for catalysis" evidence="1">
    <location>
        <position position="180"/>
    </location>
</feature>
<feature type="site" description="Critical for catalysis" evidence="1">
    <location>
        <position position="187"/>
    </location>
</feature>
<feature type="site" description="Critical for catalysis" evidence="1">
    <location>
        <position position="561"/>
    </location>
</feature>
<feature type="site" description="Critical for catalysis" evidence="1">
    <location>
        <position position="579"/>
    </location>
</feature>
<feature type="sequence conflict" description="In Ref. 2; AAG42004." evidence="10" ref="2">
    <original>S</original>
    <variation>P</variation>
    <location>
        <position position="537"/>
    </location>
</feature>
<name>GLCE_MOUSE</name>